<dbReference type="EMBL" id="AL732615">
    <property type="protein sequence ID" value="CAM17026.1"/>
    <property type="molecule type" value="Genomic_DNA"/>
</dbReference>
<dbReference type="EMBL" id="AL732615">
    <property type="protein sequence ID" value="CAM17034.1"/>
    <property type="status" value="ALT_SEQ"/>
    <property type="molecule type" value="Genomic_DNA"/>
</dbReference>
<dbReference type="EMBL" id="AL772381">
    <property type="protein sequence ID" value="CAM17034.1"/>
    <property type="status" value="JOINED"/>
    <property type="molecule type" value="Genomic_DNA"/>
</dbReference>
<dbReference type="EMBL" id="AL772381">
    <property type="protein sequence ID" value="CAM22130.1"/>
    <property type="status" value="ALT_SEQ"/>
    <property type="molecule type" value="Genomic_DNA"/>
</dbReference>
<dbReference type="EMBL" id="AL732615">
    <property type="protein sequence ID" value="CAM22130.1"/>
    <property type="status" value="JOINED"/>
    <property type="molecule type" value="Genomic_DNA"/>
</dbReference>
<dbReference type="EMBL" id="BC025099">
    <property type="protein sequence ID" value="AAH25099.1"/>
    <property type="molecule type" value="mRNA"/>
</dbReference>
<dbReference type="EMBL" id="BC029689">
    <property type="protein sequence ID" value="AAH29689.1"/>
    <property type="molecule type" value="mRNA"/>
</dbReference>
<dbReference type="CCDS" id="CCDS18142.1"/>
<dbReference type="RefSeq" id="NP_001277404.1">
    <property type="nucleotide sequence ID" value="NM_001290475.1"/>
</dbReference>
<dbReference type="RefSeq" id="NP_001342118.1">
    <property type="nucleotide sequence ID" value="NM_001355189.1"/>
</dbReference>
<dbReference type="RefSeq" id="NP_666254.1">
    <property type="nucleotide sequence ID" value="NM_146142.2"/>
</dbReference>
<dbReference type="RefSeq" id="XP_006537580.1">
    <property type="nucleotide sequence ID" value="XM_006537517.3"/>
</dbReference>
<dbReference type="RefSeq" id="XP_030108909.1">
    <property type="nucleotide sequence ID" value="XM_030253049.2"/>
</dbReference>
<dbReference type="PDB" id="2LH9">
    <property type="method" value="NMR"/>
    <property type="chains" value="A=1-76"/>
</dbReference>
<dbReference type="PDB" id="2LY1">
    <property type="method" value="NMR"/>
    <property type="chains" value="A=223-400"/>
</dbReference>
<dbReference type="PDB" id="2LY2">
    <property type="method" value="NMR"/>
    <property type="chains" value="A=223-400"/>
</dbReference>
<dbReference type="PDBsum" id="2LH9"/>
<dbReference type="PDBsum" id="2LY1"/>
<dbReference type="PDBsum" id="2LY2"/>
<dbReference type="BMRB" id="Q8K1H1"/>
<dbReference type="SMR" id="Q8K1H1"/>
<dbReference type="FunCoup" id="Q8K1H1">
    <property type="interactions" value="631"/>
</dbReference>
<dbReference type="STRING" id="10090.ENSMUSP00000103406"/>
<dbReference type="iPTMnet" id="Q8K1H1"/>
<dbReference type="PhosphoSitePlus" id="Q8K1H1"/>
<dbReference type="PaxDb" id="10090-ENSMUSP00000099993"/>
<dbReference type="PeptideAtlas" id="Q8K1H1"/>
<dbReference type="ProteomicsDB" id="262748"/>
<dbReference type="Pumba" id="Q8K1H1"/>
<dbReference type="Antibodypedia" id="14331">
    <property type="antibodies" value="99 antibodies from 22 providers"/>
</dbReference>
<dbReference type="DNASU" id="100121"/>
<dbReference type="Ensembl" id="ENSMUST00000102929.2">
    <property type="protein sequence ID" value="ENSMUSP00000099993.2"/>
    <property type="gene ID" value="ENSMUSG00000035517.18"/>
</dbReference>
<dbReference type="GeneID" id="100121"/>
<dbReference type="KEGG" id="mmu:100121"/>
<dbReference type="UCSC" id="uc008stc.2">
    <property type="organism name" value="mouse"/>
</dbReference>
<dbReference type="AGR" id="MGI:2140279"/>
<dbReference type="CTD" id="23424"/>
<dbReference type="MGI" id="MGI:2140279">
    <property type="gene designation" value="Tdrd7"/>
</dbReference>
<dbReference type="VEuPathDB" id="HostDB:ENSMUSG00000035517"/>
<dbReference type="eggNOG" id="KOG2039">
    <property type="taxonomic scope" value="Eukaryota"/>
</dbReference>
<dbReference type="GeneTree" id="ENSGT00890000139482"/>
<dbReference type="HOGENOM" id="CLU_283554_0_0_1"/>
<dbReference type="InParanoid" id="Q8K1H1"/>
<dbReference type="OrthoDB" id="10034606at2759"/>
<dbReference type="BioGRID-ORCS" id="100121">
    <property type="hits" value="4 hits in 79 CRISPR screens"/>
</dbReference>
<dbReference type="CD-CODE" id="DE1E139C">
    <property type="entry name" value="Chromatoid body"/>
</dbReference>
<dbReference type="ChiTaRS" id="Tdrd7">
    <property type="organism name" value="mouse"/>
</dbReference>
<dbReference type="EvolutionaryTrace" id="Q8K1H1"/>
<dbReference type="PRO" id="PR:Q8K1H1"/>
<dbReference type="Proteomes" id="UP000000589">
    <property type="component" value="Chromosome 4"/>
</dbReference>
<dbReference type="RNAct" id="Q8K1H1">
    <property type="molecule type" value="protein"/>
</dbReference>
<dbReference type="Bgee" id="ENSMUSG00000035517">
    <property type="expression patterns" value="Expressed in epithelium of lens and 235 other cell types or tissues"/>
</dbReference>
<dbReference type="ExpressionAtlas" id="Q8K1H1">
    <property type="expression patterns" value="baseline and differential"/>
</dbReference>
<dbReference type="GO" id="GO:0033391">
    <property type="term" value="C:chromatoid body"/>
    <property type="evidence" value="ECO:0000314"/>
    <property type="project" value="UniProtKB"/>
</dbReference>
<dbReference type="GO" id="GO:0005737">
    <property type="term" value="C:cytoplasm"/>
    <property type="evidence" value="ECO:0000314"/>
    <property type="project" value="UniProtKB"/>
</dbReference>
<dbReference type="GO" id="GO:0043186">
    <property type="term" value="C:P granule"/>
    <property type="evidence" value="ECO:0000314"/>
    <property type="project" value="MGI"/>
</dbReference>
<dbReference type="GO" id="GO:1990904">
    <property type="term" value="C:ribonucleoprotein complex"/>
    <property type="evidence" value="ECO:0000314"/>
    <property type="project" value="MGI"/>
</dbReference>
<dbReference type="GO" id="GO:0035770">
    <property type="term" value="C:ribonucleoprotein granule"/>
    <property type="evidence" value="ECO:0000250"/>
    <property type="project" value="UniProtKB"/>
</dbReference>
<dbReference type="GO" id="GO:0003729">
    <property type="term" value="F:mRNA binding"/>
    <property type="evidence" value="ECO:0000250"/>
    <property type="project" value="UniProtKB"/>
</dbReference>
<dbReference type="GO" id="GO:0007281">
    <property type="term" value="P:germ cell development"/>
    <property type="evidence" value="ECO:0000314"/>
    <property type="project" value="MGI"/>
</dbReference>
<dbReference type="GO" id="GO:0070306">
    <property type="term" value="P:lens fiber cell differentiation"/>
    <property type="evidence" value="ECO:0000315"/>
    <property type="project" value="UniProtKB"/>
</dbReference>
<dbReference type="GO" id="GO:0002089">
    <property type="term" value="P:lens morphogenesis in camera-type eye"/>
    <property type="evidence" value="ECO:0000315"/>
    <property type="project" value="UniProtKB"/>
</dbReference>
<dbReference type="GO" id="GO:0010608">
    <property type="term" value="P:post-transcriptional regulation of gene expression"/>
    <property type="evidence" value="ECO:0000250"/>
    <property type="project" value="UniProtKB"/>
</dbReference>
<dbReference type="GO" id="GO:0007283">
    <property type="term" value="P:spermatogenesis"/>
    <property type="evidence" value="ECO:0000315"/>
    <property type="project" value="UniProtKB"/>
</dbReference>
<dbReference type="CDD" id="cd09986">
    <property type="entry name" value="LOTUS_1_TDRD7"/>
    <property type="match status" value="1"/>
</dbReference>
<dbReference type="CDD" id="cd09973">
    <property type="entry name" value="LOTUS_2_TDRD7"/>
    <property type="match status" value="1"/>
</dbReference>
<dbReference type="CDD" id="cd09974">
    <property type="entry name" value="LOTUS_3_TDRD7"/>
    <property type="match status" value="1"/>
</dbReference>
<dbReference type="CDD" id="cd20428">
    <property type="entry name" value="Tudor_TDRD7_rpt2"/>
    <property type="match status" value="1"/>
</dbReference>
<dbReference type="CDD" id="cd20429">
    <property type="entry name" value="Tudor_TDRD7_rpt3"/>
    <property type="match status" value="1"/>
</dbReference>
<dbReference type="FunFam" id="3.30.420.610:FF:000008">
    <property type="entry name" value="Tudor domain-containing protein 7"/>
    <property type="match status" value="1"/>
</dbReference>
<dbReference type="FunFam" id="2.30.30.140:FF:000065">
    <property type="entry name" value="tudor domain-containing protein 7"/>
    <property type="match status" value="1"/>
</dbReference>
<dbReference type="FunFam" id="2.30.30.140:FF:000045">
    <property type="entry name" value="tudor domain-containing protein 7 isoform X1"/>
    <property type="match status" value="1"/>
</dbReference>
<dbReference type="FunFam" id="3.30.420.610:FF:000009">
    <property type="entry name" value="Tudor domain-containing protein 7 isoform X2"/>
    <property type="match status" value="1"/>
</dbReference>
<dbReference type="FunFam" id="2.30.30.140:FF:000053">
    <property type="entry name" value="tudor domain-containing protein 7 isoform X2"/>
    <property type="match status" value="1"/>
</dbReference>
<dbReference type="FunFam" id="3.30.420.610:FF:000006">
    <property type="entry name" value="tudor domain-containing protein 7 isoform X2"/>
    <property type="match status" value="1"/>
</dbReference>
<dbReference type="Gene3D" id="2.30.30.140">
    <property type="match status" value="3"/>
</dbReference>
<dbReference type="Gene3D" id="2.40.50.90">
    <property type="match status" value="3"/>
</dbReference>
<dbReference type="Gene3D" id="3.30.420.610">
    <property type="entry name" value="LOTUS domain-like"/>
    <property type="match status" value="3"/>
</dbReference>
<dbReference type="InterPro" id="IPR041966">
    <property type="entry name" value="LOTUS-like"/>
</dbReference>
<dbReference type="InterPro" id="IPR025605">
    <property type="entry name" value="OST-HTH/LOTUS_dom"/>
</dbReference>
<dbReference type="InterPro" id="IPR035437">
    <property type="entry name" value="SNase_OB-fold_sf"/>
</dbReference>
<dbReference type="InterPro" id="IPR037978">
    <property type="entry name" value="TDRD7_LOTUS_3"/>
</dbReference>
<dbReference type="InterPro" id="IPR002999">
    <property type="entry name" value="Tudor"/>
</dbReference>
<dbReference type="InterPro" id="IPR050621">
    <property type="entry name" value="Tudor_domain_containing"/>
</dbReference>
<dbReference type="InterPro" id="IPR047448">
    <property type="entry name" value="Tudor_TDRD7_rpt2"/>
</dbReference>
<dbReference type="InterPro" id="IPR047449">
    <property type="entry name" value="Tudor_TDRD7_rpt3"/>
</dbReference>
<dbReference type="PANTHER" id="PTHR22948">
    <property type="entry name" value="TUDOR DOMAIN CONTAINING PROTEIN"/>
    <property type="match status" value="1"/>
</dbReference>
<dbReference type="PANTHER" id="PTHR22948:SF14">
    <property type="entry name" value="TUDOR DOMAIN-CONTAINING PROTEIN 7"/>
    <property type="match status" value="1"/>
</dbReference>
<dbReference type="Pfam" id="PF12872">
    <property type="entry name" value="OST-HTH"/>
    <property type="match status" value="1"/>
</dbReference>
<dbReference type="Pfam" id="PF00567">
    <property type="entry name" value="TUDOR"/>
    <property type="match status" value="3"/>
</dbReference>
<dbReference type="SMART" id="SM00333">
    <property type="entry name" value="TUDOR"/>
    <property type="match status" value="3"/>
</dbReference>
<dbReference type="SUPFAM" id="SSF63748">
    <property type="entry name" value="Tudor/PWWP/MBT"/>
    <property type="match status" value="3"/>
</dbReference>
<dbReference type="PROSITE" id="PS51644">
    <property type="entry name" value="HTH_OST"/>
    <property type="match status" value="3"/>
</dbReference>
<dbReference type="PROSITE" id="PS50304">
    <property type="entry name" value="TUDOR"/>
    <property type="match status" value="2"/>
</dbReference>
<evidence type="ECO:0000250" key="1"/>
<evidence type="ECO:0000255" key="2">
    <source>
        <dbReference type="PROSITE-ProRule" id="PRU00211"/>
    </source>
</evidence>
<evidence type="ECO:0000255" key="3">
    <source>
        <dbReference type="PROSITE-ProRule" id="PRU00975"/>
    </source>
</evidence>
<evidence type="ECO:0000256" key="4">
    <source>
        <dbReference type="SAM" id="MobiDB-lite"/>
    </source>
</evidence>
<evidence type="ECO:0000269" key="5">
    <source>
    </source>
</evidence>
<evidence type="ECO:0000269" key="6">
    <source>
    </source>
</evidence>
<evidence type="ECO:0000269" key="7">
    <source>
    </source>
</evidence>
<evidence type="ECO:0000269" key="8">
    <source>
    </source>
</evidence>
<evidence type="ECO:0000305" key="9"/>
<evidence type="ECO:0007744" key="10">
    <source>
    </source>
</evidence>
<evidence type="ECO:0007829" key="11">
    <source>
        <dbReference type="PDB" id="2LH9"/>
    </source>
</evidence>
<evidence type="ECO:0007829" key="12">
    <source>
        <dbReference type="PDB" id="2LY1"/>
    </source>
</evidence>
<name>TDRD7_MOUSE</name>
<gene>
    <name type="primary">Tdrd7</name>
    <name type="synonym">Pctaire2bp</name>
</gene>
<feature type="chain" id="PRO_0000183170" description="Tudor domain-containing protein 7">
    <location>
        <begin position="1"/>
        <end position="1086"/>
    </location>
</feature>
<feature type="domain" description="HTH OST-type 1" evidence="3">
    <location>
        <begin position="3"/>
        <end position="76"/>
    </location>
</feature>
<feature type="domain" description="HTH OST-type 2" evidence="3">
    <location>
        <begin position="222"/>
        <end position="291"/>
    </location>
</feature>
<feature type="domain" description="HTH OST-type 3" evidence="3">
    <location>
        <begin position="325"/>
        <end position="394"/>
    </location>
</feature>
<feature type="domain" description="Tudor 1" evidence="2">
    <location>
        <begin position="501"/>
        <end position="558"/>
    </location>
</feature>
<feature type="domain" description="Tudor 2" evidence="2">
    <location>
        <begin position="691"/>
        <end position="748"/>
    </location>
</feature>
<feature type="region of interest" description="Disordered" evidence="4">
    <location>
        <begin position="295"/>
        <end position="324"/>
    </location>
</feature>
<feature type="region of interest" description="Disordered" evidence="4">
    <location>
        <begin position="844"/>
        <end position="866"/>
    </location>
</feature>
<feature type="region of interest" description="Interaction with CDK17" evidence="1">
    <location>
        <begin position="849"/>
        <end position="1086"/>
    </location>
</feature>
<feature type="region of interest" description="Interaction with CABLES1" evidence="5">
    <location>
        <begin position="881"/>
        <end position="1086"/>
    </location>
</feature>
<feature type="compositionally biased region" description="Basic and acidic residues" evidence="4">
    <location>
        <begin position="295"/>
        <end position="306"/>
    </location>
</feature>
<feature type="modified residue" description="Phosphoserine" evidence="10">
    <location>
        <position position="847"/>
    </location>
</feature>
<feature type="helix" evidence="11">
    <location>
        <begin position="3"/>
        <end position="17"/>
    </location>
</feature>
<feature type="helix" evidence="11">
    <location>
        <begin position="24"/>
        <end position="35"/>
    </location>
</feature>
<feature type="helix" evidence="11">
    <location>
        <begin position="41"/>
        <end position="44"/>
    </location>
</feature>
<feature type="helix" evidence="11">
    <location>
        <begin position="49"/>
        <end position="54"/>
    </location>
</feature>
<feature type="turn" evidence="11">
    <location>
        <begin position="57"/>
        <end position="59"/>
    </location>
</feature>
<feature type="strand" evidence="11">
    <location>
        <begin position="60"/>
        <end position="64"/>
    </location>
</feature>
<feature type="strand" evidence="11">
    <location>
        <begin position="70"/>
        <end position="74"/>
    </location>
</feature>
<feature type="helix" evidence="12">
    <location>
        <begin position="223"/>
        <end position="237"/>
    </location>
</feature>
<feature type="turn" evidence="12">
    <location>
        <begin position="243"/>
        <end position="245"/>
    </location>
</feature>
<feature type="helix" evidence="12">
    <location>
        <begin position="246"/>
        <end position="254"/>
    </location>
</feature>
<feature type="helix" evidence="12">
    <location>
        <begin position="260"/>
        <end position="268"/>
    </location>
</feature>
<feature type="turn" evidence="12">
    <location>
        <begin position="270"/>
        <end position="272"/>
    </location>
</feature>
<feature type="strand" evidence="12">
    <location>
        <begin position="273"/>
        <end position="276"/>
    </location>
</feature>
<feature type="turn" evidence="12">
    <location>
        <begin position="279"/>
        <end position="281"/>
    </location>
</feature>
<feature type="strand" evidence="12">
    <location>
        <begin position="286"/>
        <end position="289"/>
    </location>
</feature>
<feature type="helix" evidence="12">
    <location>
        <begin position="290"/>
        <end position="292"/>
    </location>
</feature>
<feature type="strand" evidence="12">
    <location>
        <begin position="294"/>
        <end position="296"/>
    </location>
</feature>
<feature type="helix" evidence="12">
    <location>
        <begin position="301"/>
        <end position="304"/>
    </location>
</feature>
<feature type="strand" evidence="12">
    <location>
        <begin position="309"/>
        <end position="312"/>
    </location>
</feature>
<feature type="helix" evidence="12">
    <location>
        <begin position="313"/>
        <end position="315"/>
    </location>
</feature>
<feature type="helix" evidence="12">
    <location>
        <begin position="328"/>
        <end position="338"/>
    </location>
</feature>
<feature type="helix" evidence="12">
    <location>
        <begin position="348"/>
        <end position="357"/>
    </location>
</feature>
<feature type="helix" evidence="12">
    <location>
        <begin position="363"/>
        <end position="366"/>
    </location>
</feature>
<feature type="helix" evidence="12">
    <location>
        <begin position="369"/>
        <end position="375"/>
    </location>
</feature>
<feature type="strand" evidence="12">
    <location>
        <begin position="376"/>
        <end position="383"/>
    </location>
</feature>
<feature type="turn" evidence="12">
    <location>
        <begin position="384"/>
        <end position="386"/>
    </location>
</feature>
<feature type="strand" evidence="12">
    <location>
        <begin position="387"/>
        <end position="392"/>
    </location>
</feature>
<accession>Q8K1H1</accession>
<accession>B1AWG7</accession>
<accession>B1AWH5</accession>
<accession>Q8R181</accession>
<reference key="1">
    <citation type="journal article" date="2009" name="PLoS Biol.">
        <title>Lineage-specific biology revealed by a finished genome assembly of the mouse.</title>
        <authorList>
            <person name="Church D.M."/>
            <person name="Goodstadt L."/>
            <person name="Hillier L.W."/>
            <person name="Zody M.C."/>
            <person name="Goldstein S."/>
            <person name="She X."/>
            <person name="Bult C.J."/>
            <person name="Agarwala R."/>
            <person name="Cherry J.L."/>
            <person name="DiCuccio M."/>
            <person name="Hlavina W."/>
            <person name="Kapustin Y."/>
            <person name="Meric P."/>
            <person name="Maglott D."/>
            <person name="Birtle Z."/>
            <person name="Marques A.C."/>
            <person name="Graves T."/>
            <person name="Zhou S."/>
            <person name="Teague B."/>
            <person name="Potamousis K."/>
            <person name="Churas C."/>
            <person name="Place M."/>
            <person name="Herschleb J."/>
            <person name="Runnheim R."/>
            <person name="Forrest D."/>
            <person name="Amos-Landgraf J."/>
            <person name="Schwartz D.C."/>
            <person name="Cheng Z."/>
            <person name="Lindblad-Toh K."/>
            <person name="Eichler E.E."/>
            <person name="Ponting C.P."/>
        </authorList>
    </citation>
    <scope>NUCLEOTIDE SEQUENCE [LARGE SCALE GENOMIC DNA]</scope>
    <source>
        <strain>C57BL/6J</strain>
    </source>
</reference>
<reference key="2">
    <citation type="journal article" date="2004" name="Genome Res.">
        <title>The status, quality, and expansion of the NIH full-length cDNA project: the Mammalian Gene Collection (MGC).</title>
        <authorList>
            <consortium name="The MGC Project Team"/>
        </authorList>
    </citation>
    <scope>NUCLEOTIDE SEQUENCE [LARGE SCALE MRNA]</scope>
    <source>
        <strain>C57BL/6J</strain>
        <tissue>Eye</tissue>
        <tissue>Retina</tissue>
    </source>
</reference>
<reference key="3">
    <citation type="journal article" date="2001" name="Biochem. Biophys. Res. Commun.">
        <title>ik3-1/Cables is associated with Trap and Pctaire2.</title>
        <authorList>
            <person name="Yamochi T."/>
            <person name="Nishimoto I."/>
            <person name="Okuda T."/>
            <person name="Matsuoka M."/>
        </authorList>
    </citation>
    <scope>SUBCELLULAR LOCATION</scope>
    <scope>IDENTIFICATION IN A COMPLEX WITH CABLES1 AND CDK17</scope>
    <scope>INTERACTION WITH CABLES1</scope>
    <source>
        <tissue>Brain</tissue>
    </source>
</reference>
<reference key="4">
    <citation type="journal article" date="2007" name="Dev. Biol.">
        <title>Tudor-related proteins TDRD1/MTR-1, TDRD6 and TDRD7/TRAP: domain composition, intracellular localization, and function in male germ cells in mice.</title>
        <authorList>
            <person name="Hosokawa M."/>
            <person name="Shoji M."/>
            <person name="Kitamura K."/>
            <person name="Tanaka T."/>
            <person name="Noce T."/>
            <person name="Chuma S."/>
            <person name="Nakatsuji N."/>
        </authorList>
    </citation>
    <scope>IDENTIFICATION IN A MRNP COMPLEX</scope>
    <scope>SUBCELLULAR LOCATION</scope>
    <scope>TISSUE SPECIFICITY</scope>
</reference>
<reference key="5">
    <citation type="journal article" date="2009" name="Genes Dev.">
        <title>Proteomic analysis of murine Piwi proteins reveals a role for arginine methylation in specifying interaction with Tudor family members.</title>
        <authorList>
            <person name="Vagin V.V."/>
            <person name="Wohlschlegel J."/>
            <person name="Qu J."/>
            <person name="Jonsson Z."/>
            <person name="Huang X."/>
            <person name="Chuma S."/>
            <person name="Girard A."/>
            <person name="Sachidanandam R."/>
            <person name="Hannon G.J."/>
            <person name="Aravin A.A."/>
        </authorList>
    </citation>
    <scope>INTERACTION WITH PIWIL1</scope>
</reference>
<reference key="6">
    <citation type="journal article" date="2010" name="Cell">
        <title>A tissue-specific atlas of mouse protein phosphorylation and expression.</title>
        <authorList>
            <person name="Huttlin E.L."/>
            <person name="Jedrychowski M.P."/>
            <person name="Elias J.E."/>
            <person name="Goswami T."/>
            <person name="Rad R."/>
            <person name="Beausoleil S.A."/>
            <person name="Villen J."/>
            <person name="Haas W."/>
            <person name="Sowa M.E."/>
            <person name="Gygi S.P."/>
        </authorList>
    </citation>
    <scope>PHOSPHORYLATION [LARGE SCALE ANALYSIS] AT SER-847</scope>
    <scope>IDENTIFICATION BY MASS SPECTROMETRY [LARGE SCALE ANALYSIS]</scope>
    <source>
        <tissue>Brain</tissue>
        <tissue>Kidney</tissue>
        <tissue>Liver</tissue>
        <tissue>Lung</tissue>
        <tissue>Testis</tissue>
    </source>
</reference>
<reference key="7">
    <citation type="journal article" date="2011" name="Science">
        <title>Mutations in the RNA granule component TDRD7 cause cataract and glaucoma.</title>
        <authorList>
            <person name="Lachke S.A."/>
            <person name="Alkuraya F.S."/>
            <person name="Kneeland S.C."/>
            <person name="Ohn T."/>
            <person name="Aboukhalil A."/>
            <person name="Howell G.R."/>
            <person name="Saadi I."/>
            <person name="Cavallesco R."/>
            <person name="Yue Y."/>
            <person name="Tsai A.C."/>
            <person name="Nair K.S."/>
            <person name="Cosma M.I."/>
            <person name="Smith R.S."/>
            <person name="Hodges E."/>
            <person name="Alfadhli S.M."/>
            <person name="Al-Hajeri A."/>
            <person name="Shamseldin H.E."/>
            <person name="Behbehani A."/>
            <person name="Hannon G.J."/>
            <person name="Bulyk M.L."/>
            <person name="Drack A.V."/>
            <person name="Anderson P.J."/>
            <person name="John S.W."/>
            <person name="Maas R.L."/>
        </authorList>
    </citation>
    <scope>FUNCTION</scope>
    <scope>SUBCELLULAR LOCATION</scope>
    <scope>TISSUE SPECIFICITY</scope>
    <scope>DEVELOPMENTAL STAGE</scope>
    <scope>DISRUPTION PHENOTYPE</scope>
</reference>
<comment type="function">
    <text evidence="8">Component of specific cytoplasmic RNA granules involved in post-transcriptional regulation of specific genes: probably acts by binding to specific mRNAs and regulating their translation. Required for lens transparency during lens development, by regulating translation of genes such as CRYBB3 and HSPB1 in the developing lens. Also required during spermatogenesis.</text>
</comment>
<comment type="subunit">
    <text evidence="5 6 7">Found in a mRNP complex, at least composed of TDRD1, TDRD6, TDRD7 and DDX4. Found in a complex containing CABLES1, CDK16 and CDK17. Interacts with CABLES1, CDK17 and PIWIL1.</text>
</comment>
<comment type="subcellular location">
    <subcellularLocation>
        <location evidence="5 6 8">Cytoplasm</location>
    </subcellularLocation>
    <text>Localizes to cytoplasmic RNA granules. Present in chromatoid body (CB) of spermatids (mammalian counterpart of germplasm, pole plasm or polar granules in Drosophila germ cells), also named processing bodies (P-bodies) in somatic cells. Detected in the multilobular cytoplasmic CBs (also called intermitochondrial cementin) in pachytene spermatocytes and as a single perinuclear CB in haploid round spermatids.</text>
</comment>
<comment type="tissue specificity">
    <text evidence="6 8">Mainly expressed in testis. Expressed in spermatogonia, spermatocytes and round spermatids (at protein level). Also expressed in the developing lens.</text>
</comment>
<comment type="developmental stage">
    <text evidence="8">At 12.5 dpc, it is expressed in differentiating fiber cells in the posterior lens, but not in the anterior epithelium of the lens (AEL).</text>
</comment>
<comment type="disruption phenotype">
    <text evidence="8">Mice develop cataracts and glaucoma and males are sterile. Within 4 weeks of birth, mice develop a posterior cataract that becomes severe with age. At later stages, the lens fiber cell compartment develops vacuoles with lens capsule rupture and extrusion of fiber cell mass into the vitreous. In addition, the mass of fiber cells passes through the pupil into the anterior chamber of the eye. By 4 months of age, iris flattening is detected and anterior chamber depth increased. By 6 months of age, the intraocular pressure (IOP) is elevated in some mutants, and the incidence of elevated IOP increases with age, leading to glaucome. Severe optic nerve atrophy characterized by retinal ganglion cell axon loss and excavative remodeling of the optic nerve are observed. In addition, males display sterility due to an arrest in spermatogenesis at the round spermatid stage, likely due to a chromatoid body defect.</text>
</comment>
<comment type="similarity">
    <text evidence="9">Belongs to the TDRD7 family.</text>
</comment>
<comment type="sequence caution" evidence="9">
    <conflict type="erroneous gene model prediction">
        <sequence resource="EMBL-CDS" id="CAM17034"/>
    </conflict>
</comment>
<comment type="sequence caution" evidence="9">
    <conflict type="erroneous gene model prediction">
        <sequence resource="EMBL-CDS" id="CAM22130"/>
    </conflict>
</comment>
<keyword id="KW-0002">3D-structure</keyword>
<keyword id="KW-0898">Cataract</keyword>
<keyword id="KW-0963">Cytoplasm</keyword>
<keyword id="KW-0217">Developmental protein</keyword>
<keyword id="KW-0221">Differentiation</keyword>
<keyword id="KW-0597">Phosphoprotein</keyword>
<keyword id="KW-1185">Reference proteome</keyword>
<keyword id="KW-0677">Repeat</keyword>
<keyword id="KW-0694">RNA-binding</keyword>
<keyword id="KW-0744">Spermatogenesis</keyword>
<protein>
    <recommendedName>
        <fullName>Tudor domain-containing protein 7</fullName>
    </recommendedName>
    <alternativeName>
        <fullName>PCTAIRE2-binding protein</fullName>
    </alternativeName>
    <alternativeName>
        <fullName>Tudor repeat associator with PCTAIRE-2</fullName>
        <shortName>Trap</shortName>
    </alternativeName>
</protein>
<sequence>MLEADLVSKMLRAVLQSHKNGIVLPRLQGEYRSLTGDWIPFKQLGYPTLEAYLRSVPAVVRIEASRSGEIVCYAVACTETARIAQLVARQRTSKRKIGRQINCQMRVKKAMPFFLEGKPKATLRQPGFASDYSISRKPNSALLRDRGSALGVKADVDMPPYPDTPVQRHASMSANSRFSPKSSLPASFQTHISRACPTEVNDNLNQTVEKPNITPPASYTNKMDEVQNRIKEILDKHNNGIWISKLPHFYKEFYKEDLNQGVLQQFEHWPHICTVEKPCGGGQDSLLYPARREQPLKSDQDPEKELPPPPPAPKQEVPSQGSPAVMPDVKEKVAELLGKYSSGLWASALPKAFEDMYKVKFPEDALKNLASLSDVCTINYISGNTQKAILYAKLPLPTDKILKDEGQAQGDFDIKSMIEQEYLQIEKNMAESADEFLEDITVPPLVIPTEASPSVLVVELSNTNDVVIRYVGKDYSAAQELMEDEMKEFYSKNPRVTPIQTVHVGQLLAVNAEEDAWLRAQIISTDENKIKVCYVDYGFCENIEKSKAYRLNPRFCSLSFQATKCKLAGLEVLNDDPDLVKAVESLTCGKIFAVEILDKSDVPLVVLYDTSGEDDININATCLKAICDRSLQVHLQVDAMYTNVKVTNICSDGTLYCQVPCKGLNKLNDLLHKTEDYFHCKHMTSEYFISLPFCGKICLFHCKGKWLRVEITNVHSSRALDVQFLDSGNSTSVKVSELREIPPRFLQEMLAIPPQAIKCCLADLPQSIGMWTPDAVLWLRDSVLNCSDCSIKVTKMDETKGVAYVYLFTPNNFPDPHRSINRQITNADLWKHQKDVFLSAVSTAASSPGNRNGGTPAPGSPAESLRKSHPEVIKKSVLDHTSSFSLEELPPPVHLSRSGEHMDVYVPVACHPGHFVIQPWQEIHKLEVLMEEMILYYSVSEERHIAVERDQVYAAKVENKWYRVLLKGILTNGLVSVYELDYGKHELVNIRKVQPLVDVFRKLPFQAVTAQLAGVKCSQWSEEASMVFRNHVEKKALVALVQTVVEHTNPWDRKVVLYLVDTSLPDTDTWIHDFMSQYLLELSKVN</sequence>
<proteinExistence type="evidence at protein level"/>
<organism>
    <name type="scientific">Mus musculus</name>
    <name type="common">Mouse</name>
    <dbReference type="NCBI Taxonomy" id="10090"/>
    <lineage>
        <taxon>Eukaryota</taxon>
        <taxon>Metazoa</taxon>
        <taxon>Chordata</taxon>
        <taxon>Craniata</taxon>
        <taxon>Vertebrata</taxon>
        <taxon>Euteleostomi</taxon>
        <taxon>Mammalia</taxon>
        <taxon>Eutheria</taxon>
        <taxon>Euarchontoglires</taxon>
        <taxon>Glires</taxon>
        <taxon>Rodentia</taxon>
        <taxon>Myomorpha</taxon>
        <taxon>Muroidea</taxon>
        <taxon>Muridae</taxon>
        <taxon>Murinae</taxon>
        <taxon>Mus</taxon>
        <taxon>Mus</taxon>
    </lineage>
</organism>